<proteinExistence type="evidence at protein level"/>
<comment type="subcellular location">
    <subcellularLocation>
        <location evidence="3">Cell membrane</location>
        <topology evidence="3">Multi-pass membrane protein</topology>
    </subcellularLocation>
</comment>
<gene>
    <name type="ordered locus">Rv0093c</name>
    <name type="ORF">MTCY251.12c</name>
</gene>
<dbReference type="EMBL" id="AL123456">
    <property type="protein sequence ID" value="CCP42818.1"/>
    <property type="molecule type" value="Genomic_DNA"/>
</dbReference>
<dbReference type="PIR" id="E70750">
    <property type="entry name" value="E70750"/>
</dbReference>
<dbReference type="RefSeq" id="NP_214607.1">
    <property type="nucleotide sequence ID" value="NC_000962.3"/>
</dbReference>
<dbReference type="RefSeq" id="WP_003899809.1">
    <property type="nucleotide sequence ID" value="NC_000962.3"/>
</dbReference>
<dbReference type="SMR" id="P9WM69"/>
<dbReference type="STRING" id="83332.Rv0093c"/>
<dbReference type="PaxDb" id="83332-Rv0093c"/>
<dbReference type="DNASU" id="886945"/>
<dbReference type="GeneID" id="886945"/>
<dbReference type="KEGG" id="mtu:Rv0093c"/>
<dbReference type="KEGG" id="mtv:RVBD_0093c"/>
<dbReference type="PATRIC" id="fig|83332.12.peg.106"/>
<dbReference type="TubercuList" id="Rv0093c"/>
<dbReference type="eggNOG" id="COG5660">
    <property type="taxonomic scope" value="Bacteria"/>
</dbReference>
<dbReference type="InParanoid" id="P9WM69"/>
<dbReference type="OrthoDB" id="5197868at2"/>
<dbReference type="Proteomes" id="UP000001584">
    <property type="component" value="Chromosome"/>
</dbReference>
<dbReference type="GO" id="GO:0009274">
    <property type="term" value="C:peptidoglycan-based cell wall"/>
    <property type="evidence" value="ECO:0007005"/>
    <property type="project" value="MTBBASE"/>
</dbReference>
<dbReference type="GO" id="GO:0005886">
    <property type="term" value="C:plasma membrane"/>
    <property type="evidence" value="ECO:0007005"/>
    <property type="project" value="MTBBASE"/>
</dbReference>
<dbReference type="InterPro" id="IPR027383">
    <property type="entry name" value="Znf_put"/>
</dbReference>
<dbReference type="Pfam" id="PF13490">
    <property type="entry name" value="zf-HC2"/>
    <property type="match status" value="1"/>
</dbReference>
<protein>
    <recommendedName>
        <fullName>Uncharacterized protein Rv0093c</fullName>
    </recommendedName>
</protein>
<keyword id="KW-1003">Cell membrane</keyword>
<keyword id="KW-0472">Membrane</keyword>
<keyword id="KW-1185">Reference proteome</keyword>
<keyword id="KW-0812">Transmembrane</keyword>
<keyword id="KW-1133">Transmembrane helix</keyword>
<feature type="chain" id="PRO_0000103666" description="Uncharacterized protein Rv0093c">
    <location>
        <begin position="1"/>
        <end position="282"/>
    </location>
</feature>
<feature type="transmembrane region" description="Helical" evidence="1">
    <location>
        <begin position="130"/>
        <end position="150"/>
    </location>
</feature>
<feature type="transmembrane region" description="Helical" evidence="1">
    <location>
        <begin position="170"/>
        <end position="190"/>
    </location>
</feature>
<feature type="transmembrane region" description="Helical" evidence="1">
    <location>
        <begin position="191"/>
        <end position="211"/>
    </location>
</feature>
<feature type="transmembrane region" description="Helical" evidence="1">
    <location>
        <begin position="223"/>
        <end position="243"/>
    </location>
</feature>
<feature type="region of interest" description="Disordered" evidence="2">
    <location>
        <begin position="263"/>
        <end position="282"/>
    </location>
</feature>
<sequence length="282" mass="29631">MLAQATTAGSFNHHASTVLQGCRGVPAAMWSEPAGAIRRHCATIDGMDCEVAREALSARLDGERAPVPSARVDEHLGECSACRAWFTQVASQAGDLRRLAESRPVVPPVGRLGIRRAPRRQHSPMTWRRWALLCVGIAQIALGTVQGFGLDVGLTHQHPTGAGTHLLNESTSWSIALGVIMVGAALWPSAAAGLAGVLTAFVAILTGYVIVDALSGAVSTTRILTHLPVVIGAVLAIMVWRSASGPRPRPDAVAAEPDIVLPDNASRGRRRGHLWPTDGSAA</sequence>
<name>Y093_MYCTU</name>
<organism>
    <name type="scientific">Mycobacterium tuberculosis (strain ATCC 25618 / H37Rv)</name>
    <dbReference type="NCBI Taxonomy" id="83332"/>
    <lineage>
        <taxon>Bacteria</taxon>
        <taxon>Bacillati</taxon>
        <taxon>Actinomycetota</taxon>
        <taxon>Actinomycetes</taxon>
        <taxon>Mycobacteriales</taxon>
        <taxon>Mycobacteriaceae</taxon>
        <taxon>Mycobacterium</taxon>
        <taxon>Mycobacterium tuberculosis complex</taxon>
    </lineage>
</organism>
<accession>P9WM69</accession>
<accession>L0T4A6</accession>
<accession>Q10890</accession>
<evidence type="ECO:0000255" key="1"/>
<evidence type="ECO:0000256" key="2">
    <source>
        <dbReference type="SAM" id="MobiDB-lite"/>
    </source>
</evidence>
<evidence type="ECO:0000305" key="3"/>
<reference key="1">
    <citation type="journal article" date="1998" name="Nature">
        <title>Deciphering the biology of Mycobacterium tuberculosis from the complete genome sequence.</title>
        <authorList>
            <person name="Cole S.T."/>
            <person name="Brosch R."/>
            <person name="Parkhill J."/>
            <person name="Garnier T."/>
            <person name="Churcher C.M."/>
            <person name="Harris D.E."/>
            <person name="Gordon S.V."/>
            <person name="Eiglmeier K."/>
            <person name="Gas S."/>
            <person name="Barry C.E. III"/>
            <person name="Tekaia F."/>
            <person name="Badcock K."/>
            <person name="Basham D."/>
            <person name="Brown D."/>
            <person name="Chillingworth T."/>
            <person name="Connor R."/>
            <person name="Davies R.M."/>
            <person name="Devlin K."/>
            <person name="Feltwell T."/>
            <person name="Gentles S."/>
            <person name="Hamlin N."/>
            <person name="Holroyd S."/>
            <person name="Hornsby T."/>
            <person name="Jagels K."/>
            <person name="Krogh A."/>
            <person name="McLean J."/>
            <person name="Moule S."/>
            <person name="Murphy L.D."/>
            <person name="Oliver S."/>
            <person name="Osborne J."/>
            <person name="Quail M.A."/>
            <person name="Rajandream M.A."/>
            <person name="Rogers J."/>
            <person name="Rutter S."/>
            <person name="Seeger K."/>
            <person name="Skelton S."/>
            <person name="Squares S."/>
            <person name="Squares R."/>
            <person name="Sulston J.E."/>
            <person name="Taylor K."/>
            <person name="Whitehead S."/>
            <person name="Barrell B.G."/>
        </authorList>
    </citation>
    <scope>NUCLEOTIDE SEQUENCE [LARGE SCALE GENOMIC DNA]</scope>
    <source>
        <strain>ATCC 25618 / H37Rv</strain>
    </source>
</reference>
<reference key="2">
    <citation type="journal article" date="2011" name="Mol. Cell. Proteomics">
        <title>Proteogenomic analysis of Mycobacterium tuberculosis by high resolution mass spectrometry.</title>
        <authorList>
            <person name="Kelkar D.S."/>
            <person name="Kumar D."/>
            <person name="Kumar P."/>
            <person name="Balakrishnan L."/>
            <person name="Muthusamy B."/>
            <person name="Yadav A.K."/>
            <person name="Shrivastava P."/>
            <person name="Marimuthu A."/>
            <person name="Anand S."/>
            <person name="Sundaram H."/>
            <person name="Kingsbury R."/>
            <person name="Harsha H.C."/>
            <person name="Nair B."/>
            <person name="Prasad T.S."/>
            <person name="Chauhan D.S."/>
            <person name="Katoch K."/>
            <person name="Katoch V.M."/>
            <person name="Kumar P."/>
            <person name="Chaerkady R."/>
            <person name="Ramachandran S."/>
            <person name="Dash D."/>
            <person name="Pandey A."/>
        </authorList>
    </citation>
    <scope>IDENTIFICATION BY MASS SPECTROMETRY [LARGE SCALE ANALYSIS]</scope>
    <source>
        <strain>ATCC 25618 / H37Rv</strain>
    </source>
</reference>